<gene>
    <name evidence="1" type="primary">pth</name>
    <name type="ordered locus">ERGA_CDS_00840</name>
</gene>
<protein>
    <recommendedName>
        <fullName evidence="1">Peptidyl-tRNA hydrolase</fullName>
        <shortName evidence="1">Pth</shortName>
        <ecNumber evidence="1">3.1.1.29</ecNumber>
    </recommendedName>
</protein>
<feature type="chain" id="PRO_0000187736" description="Peptidyl-tRNA hydrolase">
    <location>
        <begin position="1"/>
        <end position="193"/>
    </location>
</feature>
<feature type="active site" description="Proton acceptor" evidence="1">
    <location>
        <position position="20"/>
    </location>
</feature>
<feature type="binding site" evidence="1">
    <location>
        <position position="15"/>
    </location>
    <ligand>
        <name>tRNA</name>
        <dbReference type="ChEBI" id="CHEBI:17843"/>
    </ligand>
</feature>
<feature type="binding site" evidence="1">
    <location>
        <position position="65"/>
    </location>
    <ligand>
        <name>tRNA</name>
        <dbReference type="ChEBI" id="CHEBI:17843"/>
    </ligand>
</feature>
<feature type="binding site" evidence="1">
    <location>
        <position position="67"/>
    </location>
    <ligand>
        <name>tRNA</name>
        <dbReference type="ChEBI" id="CHEBI:17843"/>
    </ligand>
</feature>
<feature type="binding site" evidence="1">
    <location>
        <position position="113"/>
    </location>
    <ligand>
        <name>tRNA</name>
        <dbReference type="ChEBI" id="CHEBI:17843"/>
    </ligand>
</feature>
<feature type="site" description="Discriminates between blocked and unblocked aminoacyl-tRNA" evidence="1">
    <location>
        <position position="10"/>
    </location>
</feature>
<feature type="site" description="Stabilizes the basic form of H active site to accept a proton" evidence="1">
    <location>
        <position position="92"/>
    </location>
</feature>
<organism>
    <name type="scientific">Ehrlichia ruminantium (strain Gardel)</name>
    <dbReference type="NCBI Taxonomy" id="302409"/>
    <lineage>
        <taxon>Bacteria</taxon>
        <taxon>Pseudomonadati</taxon>
        <taxon>Pseudomonadota</taxon>
        <taxon>Alphaproteobacteria</taxon>
        <taxon>Rickettsiales</taxon>
        <taxon>Anaplasmataceae</taxon>
        <taxon>Ehrlichia</taxon>
    </lineage>
</organism>
<proteinExistence type="inferred from homology"/>
<accession>Q5FFA3</accession>
<comment type="function">
    <text evidence="1">Hydrolyzes ribosome-free peptidyl-tRNAs (with 1 or more amino acids incorporated), which drop off the ribosome during protein synthesis, or as a result of ribosome stalling.</text>
</comment>
<comment type="function">
    <text evidence="1">Catalyzes the release of premature peptidyl moieties from peptidyl-tRNA molecules trapped in stalled 50S ribosomal subunits, and thus maintains levels of free tRNAs and 50S ribosomes.</text>
</comment>
<comment type="catalytic activity">
    <reaction evidence="1">
        <text>an N-acyl-L-alpha-aminoacyl-tRNA + H2O = an N-acyl-L-amino acid + a tRNA + H(+)</text>
        <dbReference type="Rhea" id="RHEA:54448"/>
        <dbReference type="Rhea" id="RHEA-COMP:10123"/>
        <dbReference type="Rhea" id="RHEA-COMP:13883"/>
        <dbReference type="ChEBI" id="CHEBI:15377"/>
        <dbReference type="ChEBI" id="CHEBI:15378"/>
        <dbReference type="ChEBI" id="CHEBI:59874"/>
        <dbReference type="ChEBI" id="CHEBI:78442"/>
        <dbReference type="ChEBI" id="CHEBI:138191"/>
        <dbReference type="EC" id="3.1.1.29"/>
    </reaction>
</comment>
<comment type="subunit">
    <text evidence="1">Monomer.</text>
</comment>
<comment type="subcellular location">
    <subcellularLocation>
        <location evidence="1">Cytoplasm</location>
    </subcellularLocation>
</comment>
<comment type="similarity">
    <text evidence="1">Belongs to the PTH family.</text>
</comment>
<comment type="sequence caution" evidence="2">
    <conflict type="erroneous initiation">
        <sequence resource="EMBL-CDS" id="CAI27536"/>
    </conflict>
    <text>Extended N-terminus.</text>
</comment>
<keyword id="KW-0963">Cytoplasm</keyword>
<keyword id="KW-0378">Hydrolase</keyword>
<keyword id="KW-0694">RNA-binding</keyword>
<keyword id="KW-0820">tRNA-binding</keyword>
<evidence type="ECO:0000255" key="1">
    <source>
        <dbReference type="HAMAP-Rule" id="MF_00083"/>
    </source>
</evidence>
<evidence type="ECO:0000305" key="2"/>
<sequence>MLHLLVGLGNPGKEYELTRHNVGFMIIDAIMHHFLFPDFKKKHNALISSGSIQSYKVILAKPYTFMNNSGAPISSIVKLYKIPLDNIIVFHDETDIDFCTIRIKKGGGNAGHNGLKSIDTLLGRDYWRIRFGIGHPSNGYDLSYHVLSQFNNLNAVNNTISNIIEHISLLFENDKSIFKNKVKDLIKYTDISS</sequence>
<name>PTH_EHRRG</name>
<dbReference type="EC" id="3.1.1.29" evidence="1"/>
<dbReference type="EMBL" id="CR925677">
    <property type="protein sequence ID" value="CAI27536.1"/>
    <property type="status" value="ALT_INIT"/>
    <property type="molecule type" value="Genomic_DNA"/>
</dbReference>
<dbReference type="RefSeq" id="WP_173358424.1">
    <property type="nucleotide sequence ID" value="NC_006831.1"/>
</dbReference>
<dbReference type="SMR" id="Q5FFA3"/>
<dbReference type="KEGG" id="erg:ERGA_CDS_00840"/>
<dbReference type="HOGENOM" id="CLU_062456_1_0_5"/>
<dbReference type="Proteomes" id="UP000000533">
    <property type="component" value="Chromosome"/>
</dbReference>
<dbReference type="GO" id="GO:0005737">
    <property type="term" value="C:cytoplasm"/>
    <property type="evidence" value="ECO:0007669"/>
    <property type="project" value="UniProtKB-SubCell"/>
</dbReference>
<dbReference type="GO" id="GO:0004045">
    <property type="term" value="F:peptidyl-tRNA hydrolase activity"/>
    <property type="evidence" value="ECO:0007669"/>
    <property type="project" value="UniProtKB-UniRule"/>
</dbReference>
<dbReference type="GO" id="GO:0000049">
    <property type="term" value="F:tRNA binding"/>
    <property type="evidence" value="ECO:0007669"/>
    <property type="project" value="UniProtKB-UniRule"/>
</dbReference>
<dbReference type="GO" id="GO:0006515">
    <property type="term" value="P:protein quality control for misfolded or incompletely synthesized proteins"/>
    <property type="evidence" value="ECO:0007669"/>
    <property type="project" value="UniProtKB-UniRule"/>
</dbReference>
<dbReference type="GO" id="GO:0072344">
    <property type="term" value="P:rescue of stalled ribosome"/>
    <property type="evidence" value="ECO:0007669"/>
    <property type="project" value="UniProtKB-UniRule"/>
</dbReference>
<dbReference type="CDD" id="cd00462">
    <property type="entry name" value="PTH"/>
    <property type="match status" value="1"/>
</dbReference>
<dbReference type="FunFam" id="3.40.50.1470:FF:000001">
    <property type="entry name" value="Peptidyl-tRNA hydrolase"/>
    <property type="match status" value="1"/>
</dbReference>
<dbReference type="Gene3D" id="3.40.50.1470">
    <property type="entry name" value="Peptidyl-tRNA hydrolase"/>
    <property type="match status" value="1"/>
</dbReference>
<dbReference type="HAMAP" id="MF_00083">
    <property type="entry name" value="Pept_tRNA_hydro_bact"/>
    <property type="match status" value="1"/>
</dbReference>
<dbReference type="InterPro" id="IPR001328">
    <property type="entry name" value="Pept_tRNA_hydro"/>
</dbReference>
<dbReference type="InterPro" id="IPR018171">
    <property type="entry name" value="Pept_tRNA_hydro_CS"/>
</dbReference>
<dbReference type="InterPro" id="IPR036416">
    <property type="entry name" value="Pept_tRNA_hydro_sf"/>
</dbReference>
<dbReference type="NCBIfam" id="TIGR00447">
    <property type="entry name" value="pth"/>
    <property type="match status" value="1"/>
</dbReference>
<dbReference type="PANTHER" id="PTHR17224">
    <property type="entry name" value="PEPTIDYL-TRNA HYDROLASE"/>
    <property type="match status" value="1"/>
</dbReference>
<dbReference type="PANTHER" id="PTHR17224:SF1">
    <property type="entry name" value="PEPTIDYL-TRNA HYDROLASE"/>
    <property type="match status" value="1"/>
</dbReference>
<dbReference type="Pfam" id="PF01195">
    <property type="entry name" value="Pept_tRNA_hydro"/>
    <property type="match status" value="1"/>
</dbReference>
<dbReference type="SUPFAM" id="SSF53178">
    <property type="entry name" value="Peptidyl-tRNA hydrolase-like"/>
    <property type="match status" value="1"/>
</dbReference>
<dbReference type="PROSITE" id="PS01195">
    <property type="entry name" value="PEPT_TRNA_HYDROL_1"/>
    <property type="match status" value="1"/>
</dbReference>
<dbReference type="PROSITE" id="PS01196">
    <property type="entry name" value="PEPT_TRNA_HYDROL_2"/>
    <property type="match status" value="1"/>
</dbReference>
<reference key="1">
    <citation type="journal article" date="2006" name="J. Bacteriol.">
        <title>Comparative genomic analysis of three strains of Ehrlichia ruminantium reveals an active process of genome size plasticity.</title>
        <authorList>
            <person name="Frutos R."/>
            <person name="Viari A."/>
            <person name="Ferraz C."/>
            <person name="Morgat A."/>
            <person name="Eychenie S."/>
            <person name="Kandassamy Y."/>
            <person name="Chantal I."/>
            <person name="Bensaid A."/>
            <person name="Coissac E."/>
            <person name="Vachiery N."/>
            <person name="Demaille J."/>
            <person name="Martinez D."/>
        </authorList>
    </citation>
    <scope>NUCLEOTIDE SEQUENCE [LARGE SCALE GENOMIC DNA]</scope>
    <source>
        <strain>Gardel</strain>
    </source>
</reference>